<gene>
    <name type="primary">Cyp11b2</name>
    <name type="synonym">Cyp11b-2</name>
</gene>
<organism>
    <name type="scientific">Rattus norvegicus</name>
    <name type="common">Rat</name>
    <dbReference type="NCBI Taxonomy" id="10116"/>
    <lineage>
        <taxon>Eukaryota</taxon>
        <taxon>Metazoa</taxon>
        <taxon>Chordata</taxon>
        <taxon>Craniata</taxon>
        <taxon>Vertebrata</taxon>
        <taxon>Euteleostomi</taxon>
        <taxon>Mammalia</taxon>
        <taxon>Eutheria</taxon>
        <taxon>Euarchontoglires</taxon>
        <taxon>Glires</taxon>
        <taxon>Rodentia</taxon>
        <taxon>Myomorpha</taxon>
        <taxon>Muroidea</taxon>
        <taxon>Muridae</taxon>
        <taxon>Murinae</taxon>
        <taxon>Rattus</taxon>
    </lineage>
</organism>
<name>C11B2_RAT</name>
<comment type="function">
    <text evidence="2 3 4 5 6 7">A cytochrome P450 monooxygenase that catalyzes the biosynthesis of aldosterone, the main mineralocorticoid responsible for salt and water homeostasis (PubMed:1562515, PubMed:1765101, PubMed:2350348, PubMed:2738055). Catalyzes three sequential oxidative reactions of 11-deoxycorticosterone (21-hydroxyprogesterone), namely 11-beta hydroxylation, followed by two successive oxidations at C18 yielding 18-hydroxy and then 18-oxo intermediates (that do not leave the enzyme active site during the consecutive hydroxylation reactions), and end with the formation of aldosterone (PubMed:1765101, PubMed:2350348, PubMed:2738055, PubMed:8333830). Can also produce 18-hydroxycortisol and 18-oxocortisol, derived from successive oxidations of cortisol at C18, normally found at very low levels, but significantly increased in primary aldosteronism, the most common form of secondary hypertension (By similarity) (PubMed:1562515). Mechanistically, uses molecular oxygen inserting one oxygen atom into a substrate and reducing the second into a water molecule. Two electrons are provided by NADPH via a two-protein mitochondrial transfer system comprising flavoprotein FDXR (adrenodoxin/ferredoxin reductase) and nonheme iron-sulfur protein FDX1 or FDX2 (adrenodoxin/ferredoxin). Could also be involved in the androgen metabolic pathway (By similarity).</text>
</comment>
<comment type="catalytic activity">
    <reaction evidence="3 4 5 6 7">
        <text>a steroid + 2 reduced [adrenodoxin] + O2 + 2 H(+) = an 11beta-hydroxysteroid + 2 oxidized [adrenodoxin] + H2O</text>
        <dbReference type="Rhea" id="RHEA:15629"/>
        <dbReference type="Rhea" id="RHEA-COMP:9998"/>
        <dbReference type="Rhea" id="RHEA-COMP:9999"/>
        <dbReference type="ChEBI" id="CHEBI:15377"/>
        <dbReference type="ChEBI" id="CHEBI:15378"/>
        <dbReference type="ChEBI" id="CHEBI:15379"/>
        <dbReference type="ChEBI" id="CHEBI:33737"/>
        <dbReference type="ChEBI" id="CHEBI:33738"/>
        <dbReference type="ChEBI" id="CHEBI:35341"/>
        <dbReference type="ChEBI" id="CHEBI:35346"/>
        <dbReference type="EC" id="1.14.15.4"/>
    </reaction>
    <physiologicalReaction direction="left-to-right" evidence="13 14 15 16 17">
        <dbReference type="Rhea" id="RHEA:15630"/>
    </physiologicalReaction>
</comment>
<comment type="catalytic activity">
    <reaction evidence="3 4 5 6 7">
        <text>21-hydroxyprogesterone + 2 reduced [adrenodoxin] + O2 + 2 H(+) = corticosterone + 2 oxidized [adrenodoxin] + H2O</text>
        <dbReference type="Rhea" id="RHEA:46104"/>
        <dbReference type="Rhea" id="RHEA-COMP:9998"/>
        <dbReference type="Rhea" id="RHEA-COMP:9999"/>
        <dbReference type="ChEBI" id="CHEBI:15377"/>
        <dbReference type="ChEBI" id="CHEBI:15378"/>
        <dbReference type="ChEBI" id="CHEBI:15379"/>
        <dbReference type="ChEBI" id="CHEBI:16827"/>
        <dbReference type="ChEBI" id="CHEBI:16973"/>
        <dbReference type="ChEBI" id="CHEBI:33737"/>
        <dbReference type="ChEBI" id="CHEBI:33738"/>
    </reaction>
    <physiologicalReaction direction="left-to-right" evidence="13 14 15 16 17">
        <dbReference type="Rhea" id="RHEA:46105"/>
    </physiologicalReaction>
</comment>
<comment type="catalytic activity">
    <reaction evidence="4 13 15 16 17">
        <text>corticosterone + 2 reduced [adrenodoxin] + O2 + 2 H(+) = 18-hydroxycorticosterone + 2 oxidized [adrenodoxin] + H2O</text>
        <dbReference type="Rhea" id="RHEA:11872"/>
        <dbReference type="Rhea" id="RHEA-COMP:9998"/>
        <dbReference type="Rhea" id="RHEA-COMP:9999"/>
        <dbReference type="ChEBI" id="CHEBI:15377"/>
        <dbReference type="ChEBI" id="CHEBI:15378"/>
        <dbReference type="ChEBI" id="CHEBI:15379"/>
        <dbReference type="ChEBI" id="CHEBI:16485"/>
        <dbReference type="ChEBI" id="CHEBI:16827"/>
        <dbReference type="ChEBI" id="CHEBI:33737"/>
        <dbReference type="ChEBI" id="CHEBI:33738"/>
        <dbReference type="EC" id="1.14.15.5"/>
    </reaction>
    <physiologicalReaction direction="left-to-right" evidence="13 14 15 16 17">
        <dbReference type="Rhea" id="RHEA:11873"/>
    </physiologicalReaction>
</comment>
<comment type="catalytic activity">
    <reaction evidence="4 13 15 16 17">
        <text>18-hydroxycorticosterone + 2 reduced [adrenodoxin] + O2 + 2 H(+) = aldosterone + 2 oxidized [adrenodoxin] + 2 H2O</text>
        <dbReference type="Rhea" id="RHEA:50792"/>
        <dbReference type="Rhea" id="RHEA-COMP:9998"/>
        <dbReference type="Rhea" id="RHEA-COMP:9999"/>
        <dbReference type="ChEBI" id="CHEBI:15377"/>
        <dbReference type="ChEBI" id="CHEBI:15378"/>
        <dbReference type="ChEBI" id="CHEBI:15379"/>
        <dbReference type="ChEBI" id="CHEBI:16485"/>
        <dbReference type="ChEBI" id="CHEBI:27584"/>
        <dbReference type="ChEBI" id="CHEBI:33737"/>
        <dbReference type="ChEBI" id="CHEBI:33738"/>
    </reaction>
    <physiologicalReaction direction="left-to-right" evidence="13 14 15 16 17">
        <dbReference type="Rhea" id="RHEA:50793"/>
    </physiologicalReaction>
</comment>
<comment type="catalytic activity">
    <reaction evidence="3">
        <text>11-deoxycortisol + 2 reduced [adrenodoxin] + O2 + 2 H(+) = cortisol + 2 oxidized [adrenodoxin] + H2O</text>
        <dbReference type="Rhea" id="RHEA:46100"/>
        <dbReference type="Rhea" id="RHEA-COMP:9998"/>
        <dbReference type="Rhea" id="RHEA-COMP:9999"/>
        <dbReference type="ChEBI" id="CHEBI:15377"/>
        <dbReference type="ChEBI" id="CHEBI:15378"/>
        <dbReference type="ChEBI" id="CHEBI:15379"/>
        <dbReference type="ChEBI" id="CHEBI:17650"/>
        <dbReference type="ChEBI" id="CHEBI:28324"/>
        <dbReference type="ChEBI" id="CHEBI:33737"/>
        <dbReference type="ChEBI" id="CHEBI:33738"/>
    </reaction>
    <physiologicalReaction direction="left-to-right" evidence="13">
        <dbReference type="Rhea" id="RHEA:46101"/>
    </physiologicalReaction>
</comment>
<comment type="catalytic activity">
    <reaction evidence="13">
        <text>cortisol + 2 reduced [adrenodoxin] + O2 + 2 H(+) = 18-hydroxycortisol + 2 oxidized [adrenodoxin] + H2O</text>
        <dbReference type="Rhea" id="RHEA:76019"/>
        <dbReference type="Rhea" id="RHEA-COMP:9998"/>
        <dbReference type="Rhea" id="RHEA-COMP:9999"/>
        <dbReference type="ChEBI" id="CHEBI:15377"/>
        <dbReference type="ChEBI" id="CHEBI:15378"/>
        <dbReference type="ChEBI" id="CHEBI:15379"/>
        <dbReference type="ChEBI" id="CHEBI:17650"/>
        <dbReference type="ChEBI" id="CHEBI:33737"/>
        <dbReference type="ChEBI" id="CHEBI:33738"/>
        <dbReference type="ChEBI" id="CHEBI:89455"/>
    </reaction>
    <physiologicalReaction direction="left-to-right" evidence="13">
        <dbReference type="Rhea" id="RHEA:76020"/>
    </physiologicalReaction>
</comment>
<comment type="catalytic activity">
    <reaction evidence="6">
        <text>21-hydroxyprogesterone + 2 reduced [adrenodoxin] + O2 + 2 H(+) = 18-hydroxy-11-deoxycorticosterone + 2 oxidized [adrenodoxin] + H2O</text>
        <dbReference type="Rhea" id="RHEA:76151"/>
        <dbReference type="Rhea" id="RHEA-COMP:9998"/>
        <dbReference type="Rhea" id="RHEA-COMP:9999"/>
        <dbReference type="ChEBI" id="CHEBI:15377"/>
        <dbReference type="ChEBI" id="CHEBI:15378"/>
        <dbReference type="ChEBI" id="CHEBI:15379"/>
        <dbReference type="ChEBI" id="CHEBI:16973"/>
        <dbReference type="ChEBI" id="CHEBI:33737"/>
        <dbReference type="ChEBI" id="CHEBI:33738"/>
        <dbReference type="ChEBI" id="CHEBI:195166"/>
    </reaction>
    <physiologicalReaction direction="left-to-right" evidence="16">
        <dbReference type="Rhea" id="RHEA:76152"/>
    </physiologicalReaction>
</comment>
<comment type="catalytic activity">
    <reaction evidence="2">
        <text>18-hydroxycortisol + 2 reduced [adrenodoxin] + O2 + 2 H(+) = 18-oxocortisol + 2 oxidized [adrenodoxin] + 2 H2O</text>
        <dbReference type="Rhea" id="RHEA:76023"/>
        <dbReference type="Rhea" id="RHEA-COMP:9998"/>
        <dbReference type="Rhea" id="RHEA-COMP:9999"/>
        <dbReference type="ChEBI" id="CHEBI:15377"/>
        <dbReference type="ChEBI" id="CHEBI:15378"/>
        <dbReference type="ChEBI" id="CHEBI:15379"/>
        <dbReference type="ChEBI" id="CHEBI:33737"/>
        <dbReference type="ChEBI" id="CHEBI:33738"/>
        <dbReference type="ChEBI" id="CHEBI:89213"/>
        <dbReference type="ChEBI" id="CHEBI:89455"/>
    </reaction>
    <physiologicalReaction direction="left-to-right" evidence="2">
        <dbReference type="Rhea" id="RHEA:76024"/>
    </physiologicalReaction>
</comment>
<comment type="cofactor">
    <cofactor evidence="2">
        <name>heme</name>
        <dbReference type="ChEBI" id="CHEBI:30413"/>
    </cofactor>
</comment>
<comment type="pathway">
    <text evidence="14">Steroid biosynthesis.</text>
</comment>
<comment type="subcellular location">
    <subcellularLocation>
        <location evidence="1">Mitochondrion inner membrane</location>
        <topology evidence="1">Peripheral membrane protein</topology>
    </subcellularLocation>
</comment>
<comment type="tissue specificity">
    <text evidence="6">Adrenal cortex.</text>
</comment>
<comment type="induction">
    <text evidence="8">A 12-fold increase was seen in the presence of a low sodium-high potassium diet.</text>
</comment>
<comment type="similarity">
    <text evidence="12">Belongs to the cytochrome P450 family.</text>
</comment>
<accession>P30099</accession>
<accession>Q64540</accession>
<feature type="transit peptide" description="Mitochondrion" evidence="6">
    <location>
        <begin position="1"/>
        <end position="34"/>
    </location>
</feature>
<feature type="chain" id="PRO_0000003604" description="Cytochrome P450 11B2, mitochondrial">
    <location>
        <begin position="35"/>
        <end position="510"/>
    </location>
</feature>
<feature type="binding site" evidence="2">
    <location>
        <position position="391"/>
    </location>
    <ligand>
        <name>21-hydroxyprogesterone</name>
        <dbReference type="ChEBI" id="CHEBI:16973"/>
    </ligand>
</feature>
<feature type="binding site" description="axial binding residue" evidence="2">
    <location>
        <position position="457"/>
    </location>
    <ligand>
        <name>heme</name>
        <dbReference type="ChEBI" id="CHEBI:30413"/>
    </ligand>
    <ligandPart>
        <name>Fe</name>
        <dbReference type="ChEBI" id="CHEBI:18248"/>
    </ligandPart>
</feature>
<feature type="sequence variant" evidence="8">
    <original>E</original>
    <variation>G</variation>
    <location>
        <position position="84"/>
    </location>
</feature>
<feature type="sequence variant">
    <original>E</original>
    <variation>D</variation>
    <location>
        <position position="146"/>
    </location>
</feature>
<feature type="sequence variant">
    <original>Q</original>
    <variation>R</variation>
    <location>
        <position position="261"/>
    </location>
</feature>
<feature type="sequence variant">
    <original>I</original>
    <variation>V</variation>
    <location>
        <position position="509"/>
    </location>
</feature>
<feature type="sequence conflict" description="In Ref. 3; AAB60457." evidence="12" ref="3">
    <original>MGACDNDFIELHS</original>
    <variation>MNKAPAKAL</variation>
    <location>
        <begin position="1"/>
        <end position="13"/>
    </location>
</feature>
<proteinExistence type="evidence at protein level"/>
<reference key="1">
    <citation type="journal article" date="1990" name="Biochem. Biophys. Res. Commun.">
        <title>Molecular cloning and expression of cDNAS encoding rat aldosterone synthase: variants of cytochrome P-450(11 beta).</title>
        <authorList>
            <person name="Matsukawa N."/>
            <person name="Nonaka Y."/>
            <person name="Ying Z."/>
            <person name="Higaki J."/>
            <person name="Ogihara T."/>
            <person name="Okamoto M."/>
        </authorList>
    </citation>
    <scope>NUCLEOTIDE SEQUENCE [MRNA]</scope>
    <scope>FUNCTION</scope>
    <scope>CATALYTIC ACTIVITY</scope>
    <source>
        <tissue>Adrenal gland</tissue>
    </source>
</reference>
<reference key="2">
    <citation type="journal article" date="1992" name="J. Steroid Biochem. Mol. Biol.">
        <title>Molecular biology of rat steroid 11 beta-hydroxylase [P450(11 beta)] and aldosterone synthase [P450(11 beta, aldo)].</title>
        <authorList>
            <person name="Okamoto M."/>
            <person name="Nonaka Y."/>
        </authorList>
    </citation>
    <scope>NUCLEOTIDE SEQUENCE [MRNA]</scope>
    <scope>FUNCTION</scope>
    <scope>CATALYTIC ACTIVITY</scope>
</reference>
<reference key="3">
    <citation type="journal article" date="1993" name="Biochem. Biophys. Res. Commun.">
        <title>Cloning and expression of a rat cytochrome P-450 11 beta-hydroxylase/aldosterone synthase (CYP11B2) cDNA variant.</title>
        <authorList>
            <person name="Zhou M."/>
            <person name="Gomez-Sanchez C.E."/>
        </authorList>
    </citation>
    <scope>NUCLEOTIDE SEQUENCE [MRNA]</scope>
    <scope>CATALYTIC ACTIVITY</scope>
    <scope>FUNCTION</scope>
    <source>
        <strain>Sprague-Dawley</strain>
        <tissue>Adrenal gland</tissue>
    </source>
</reference>
<reference key="4">
    <citation type="journal article" date="1993" name="J. Biochem.">
        <title>Three forms of rat CYP11B genes: 11 beta-hydroxylase gene, aldosterone synthase gene, and a novel gene.</title>
        <authorList>
            <person name="Nomura M."/>
            <person name="Morohashi K."/>
            <person name="Kirita S."/>
            <person name="Nonaka Y."/>
            <person name="Okamoto M."/>
            <person name="Nawata H."/>
            <person name="Omura T."/>
        </authorList>
    </citation>
    <scope>NUCLEOTIDE SEQUENCE [MRNA]</scope>
    <scope>INDUCTION</scope>
    <scope>VARIANT GLY-84</scope>
</reference>
<reference key="5">
    <citation type="journal article" date="1989" name="J. Biol. Chem.">
        <title>Isolation of aldosterone synthase cytochrome P-450 from zona glomerulosa mitochondria of rat adrenal cortex.</title>
        <authorList>
            <person name="Ogishima T."/>
            <person name="Mitani F."/>
            <person name="Ishimura Y."/>
        </authorList>
    </citation>
    <scope>PROTEIN SEQUENCE OF 35-54</scope>
    <scope>FUNCTION</scope>
    <scope>CATALYTIC ACTIVITY</scope>
    <scope>TISSUE SPECIFICITY</scope>
    <source>
        <tissue>Adrenal cortex</tissue>
    </source>
</reference>
<reference key="6">
    <citation type="journal article" date="1991" name="Eur. J. Biochem.">
        <title>Functional expression of the cDNAs encoding rat 11 beta-hydroxylase [cytochrome P450(11 beta)] and aldosterone synthase [cytochrome P450(11 beta, aldo)].</title>
        <authorList>
            <person name="Nonaka Y."/>
            <person name="Okamoto M."/>
        </authorList>
    </citation>
    <scope>FUNCTION</scope>
    <scope>CATALYTIC ACTIVITY</scope>
    <scope>PATHWAY</scope>
</reference>
<evidence type="ECO:0000250" key="1">
    <source>
        <dbReference type="UniProtKB" id="P14137"/>
    </source>
</evidence>
<evidence type="ECO:0000250" key="2">
    <source>
        <dbReference type="UniProtKB" id="P19099"/>
    </source>
</evidence>
<evidence type="ECO:0000269" key="3">
    <source>
    </source>
</evidence>
<evidence type="ECO:0000269" key="4">
    <source>
    </source>
</evidence>
<evidence type="ECO:0000269" key="5">
    <source>
    </source>
</evidence>
<evidence type="ECO:0000269" key="6">
    <source>
    </source>
</evidence>
<evidence type="ECO:0000269" key="7">
    <source>
    </source>
</evidence>
<evidence type="ECO:0000269" key="8">
    <source>
    </source>
</evidence>
<evidence type="ECO:0000303" key="9">
    <source>
    </source>
</evidence>
<evidence type="ECO:0000303" key="10">
    <source>
    </source>
</evidence>
<evidence type="ECO:0000303" key="11">
    <source>
    </source>
</evidence>
<evidence type="ECO:0000305" key="12"/>
<evidence type="ECO:0000305" key="13">
    <source>
    </source>
</evidence>
<evidence type="ECO:0000305" key="14">
    <source>
    </source>
</evidence>
<evidence type="ECO:0000305" key="15">
    <source>
    </source>
</evidence>
<evidence type="ECO:0000305" key="16">
    <source>
    </source>
</evidence>
<evidence type="ECO:0000305" key="17">
    <source>
    </source>
</evidence>
<protein>
    <recommendedName>
        <fullName>Cytochrome P450 11B2, mitochondrial</fullName>
    </recommendedName>
    <alternativeName>
        <fullName evidence="11">Aldosterone synthase</fullName>
        <shortName>ALDOS</shortName>
    </alternativeName>
    <alternativeName>
        <fullName>Aldosterone-synthesizing enzyme</fullName>
    </alternativeName>
    <alternativeName>
        <fullName>CYPXIB2</fullName>
    </alternativeName>
    <alternativeName>
        <fullName>Corticosterone 18-monooxygenase, CYP11B2</fullName>
        <ecNumber evidence="2">1.14.15.5</ecNumber>
    </alternativeName>
    <alternativeName>
        <fullName evidence="11">Cytochrome P-450Aldo</fullName>
    </alternativeName>
    <alternativeName>
        <fullName>Cytochrome P-450C18</fullName>
    </alternativeName>
    <alternativeName>
        <fullName evidence="10">Cytochrome P450(11beta,aldo)</fullName>
        <shortName evidence="9 10">P450(11beta,aldo)</shortName>
    </alternativeName>
    <alternativeName>
        <fullName>Cytochrome P450-Aldo-1</fullName>
    </alternativeName>
    <alternativeName>
        <fullName evidence="2">Steroid 11-beta-hydroxylase, CYP11B2</fullName>
        <ecNumber evidence="2">1.14.15.4</ecNumber>
    </alternativeName>
    <alternativeName>
        <fullName>Steroid 18-hydroxylase</fullName>
    </alternativeName>
</protein>
<sequence length="510" mass="58241">MGACDNDFIELHSRVTADVWLARPWQCLHRTRALGTTATLAPKTLKPFEAIPQYSRNKWLKMIQILREQGQENLHLEMHQAFQELGPIFRHSAGGAQIVSVMLPEDAEKLHQVESILPRRMHLEPWVAHRELRGLRRGVFLLNGAEWRFNRLKLNPNVLSPKAVQNFVPMVDEVARDFLEALKKKVRQNARGSLTMDVQQSLFNYTIEASNFALFGERLGLLGHDLNPGSLKFIHALHSMFKSTTQLLFLPRSLTRWTSTQVWKEHFDAWDVISEYANRCIWKVHQELRLGSSQTYSGIVAALITQGALPLDAIKANSMELTAGSVDTTAIPLVMTLFELARNPDVQQALRQETLAAEASIAANPQKAMSDLPLLRAALKETLRLYPVGGFLERILNSDLVLQNYHVPAGTLVLLYLYSMGRNPAVFPRPERYMPQRWLERKRSFQHLAFGFGVRQCLGRRLAEVEMLLLLHHMLKTFQVETLRQEDVQMAYRFVLMPSSSPVLTFRPIS</sequence>
<dbReference type="EC" id="1.14.15.5" evidence="2"/>
<dbReference type="EC" id="1.14.15.4" evidence="2"/>
<dbReference type="EMBL" id="D00567">
    <property type="protein sequence ID" value="BAA00444.1"/>
    <property type="molecule type" value="mRNA"/>
</dbReference>
<dbReference type="EMBL" id="U14908">
    <property type="protein sequence ID" value="AAB60457.1"/>
    <property type="molecule type" value="mRNA"/>
</dbReference>
<dbReference type="PIR" id="A35342">
    <property type="entry name" value="A35342"/>
</dbReference>
<dbReference type="PIR" id="JN0615">
    <property type="entry name" value="JN0615"/>
</dbReference>
<dbReference type="SMR" id="P30099"/>
<dbReference type="FunCoup" id="P30099">
    <property type="interactions" value="15"/>
</dbReference>
<dbReference type="BindingDB" id="P30099"/>
<dbReference type="ChEMBL" id="CHEMBL3237"/>
<dbReference type="DrugCentral" id="P30099"/>
<dbReference type="iPTMnet" id="P30099"/>
<dbReference type="PhosphoSitePlus" id="P30099"/>
<dbReference type="UCSC" id="RGD:2454">
    <property type="organism name" value="rat"/>
</dbReference>
<dbReference type="AGR" id="RGD:2454"/>
<dbReference type="RGD" id="2454">
    <property type="gene designation" value="Cyp11b2"/>
</dbReference>
<dbReference type="InParanoid" id="P30099"/>
<dbReference type="PhylomeDB" id="P30099"/>
<dbReference type="Reactome" id="R-RNO-193993">
    <property type="pathway name" value="Mineralocorticoid biosynthesis"/>
</dbReference>
<dbReference type="Reactome" id="R-RNO-194002">
    <property type="pathway name" value="Glucocorticoid biosynthesis"/>
</dbReference>
<dbReference type="Reactome" id="R-RNO-211976">
    <property type="pathway name" value="Endogenous sterols"/>
</dbReference>
<dbReference type="PRO" id="PR:P30099"/>
<dbReference type="Proteomes" id="UP000002494">
    <property type="component" value="Unplaced"/>
</dbReference>
<dbReference type="GO" id="GO:0030425">
    <property type="term" value="C:dendrite"/>
    <property type="evidence" value="ECO:0000314"/>
    <property type="project" value="RGD"/>
</dbReference>
<dbReference type="GO" id="GO:0005743">
    <property type="term" value="C:mitochondrial inner membrane"/>
    <property type="evidence" value="ECO:0000318"/>
    <property type="project" value="GO_Central"/>
</dbReference>
<dbReference type="GO" id="GO:0005739">
    <property type="term" value="C:mitochondrion"/>
    <property type="evidence" value="ECO:0000266"/>
    <property type="project" value="RGD"/>
</dbReference>
<dbReference type="GO" id="GO:0047783">
    <property type="term" value="F:corticosterone 18-monooxygenase activity"/>
    <property type="evidence" value="ECO:0000314"/>
    <property type="project" value="RGD"/>
</dbReference>
<dbReference type="GO" id="GO:0020037">
    <property type="term" value="F:heme binding"/>
    <property type="evidence" value="ECO:0000250"/>
    <property type="project" value="UniProtKB"/>
</dbReference>
<dbReference type="GO" id="GO:0005506">
    <property type="term" value="F:iron ion binding"/>
    <property type="evidence" value="ECO:0007669"/>
    <property type="project" value="InterPro"/>
</dbReference>
<dbReference type="GO" id="GO:0004507">
    <property type="term" value="F:steroid 11-beta-monooxygenase activity"/>
    <property type="evidence" value="ECO:0000314"/>
    <property type="project" value="RGD"/>
</dbReference>
<dbReference type="GO" id="GO:0032342">
    <property type="term" value="P:aldosterone biosynthetic process"/>
    <property type="evidence" value="ECO:0000314"/>
    <property type="project" value="RGD"/>
</dbReference>
<dbReference type="GO" id="GO:0006700">
    <property type="term" value="P:C21-steroid hormone biosynthetic process"/>
    <property type="evidence" value="ECO:0000314"/>
    <property type="project" value="RGD"/>
</dbReference>
<dbReference type="GO" id="GO:0032870">
    <property type="term" value="P:cellular response to hormone stimulus"/>
    <property type="evidence" value="ECO:0000266"/>
    <property type="project" value="RGD"/>
</dbReference>
<dbReference type="GO" id="GO:0071260">
    <property type="term" value="P:cellular response to mechanical stimulus"/>
    <property type="evidence" value="ECO:0000270"/>
    <property type="project" value="RGD"/>
</dbReference>
<dbReference type="GO" id="GO:0031670">
    <property type="term" value="P:cellular response to nutrient"/>
    <property type="evidence" value="ECO:0000270"/>
    <property type="project" value="RGD"/>
</dbReference>
<dbReference type="GO" id="GO:0071375">
    <property type="term" value="P:cellular response to peptide hormone stimulus"/>
    <property type="evidence" value="ECO:0000270"/>
    <property type="project" value="RGD"/>
</dbReference>
<dbReference type="GO" id="GO:0035865">
    <property type="term" value="P:cellular response to potassium ion"/>
    <property type="evidence" value="ECO:0000266"/>
    <property type="project" value="RGD"/>
</dbReference>
<dbReference type="GO" id="GO:0051365">
    <property type="term" value="P:cellular response to potassium ion starvation"/>
    <property type="evidence" value="ECO:0000270"/>
    <property type="project" value="RGD"/>
</dbReference>
<dbReference type="GO" id="GO:0008203">
    <property type="term" value="P:cholesterol metabolic process"/>
    <property type="evidence" value="ECO:0000318"/>
    <property type="project" value="GO_Central"/>
</dbReference>
<dbReference type="GO" id="GO:0034651">
    <property type="term" value="P:cortisol biosynthetic process"/>
    <property type="evidence" value="ECO:0000266"/>
    <property type="project" value="RGD"/>
</dbReference>
<dbReference type="GO" id="GO:0034650">
    <property type="term" value="P:cortisol metabolic process"/>
    <property type="evidence" value="ECO:0000318"/>
    <property type="project" value="GO_Central"/>
</dbReference>
<dbReference type="GO" id="GO:0006704">
    <property type="term" value="P:glucocorticoid biosynthetic process"/>
    <property type="evidence" value="ECO:0000314"/>
    <property type="project" value="RGD"/>
</dbReference>
<dbReference type="GO" id="GO:0045777">
    <property type="term" value="P:positive regulation of blood pressure"/>
    <property type="evidence" value="ECO:0000315"/>
    <property type="project" value="RGD"/>
</dbReference>
<dbReference type="GO" id="GO:0008217">
    <property type="term" value="P:regulation of blood pressure"/>
    <property type="evidence" value="ECO:0000266"/>
    <property type="project" value="RGD"/>
</dbReference>
<dbReference type="GO" id="GO:0032868">
    <property type="term" value="P:response to insulin"/>
    <property type="evidence" value="ECO:0000270"/>
    <property type="project" value="RGD"/>
</dbReference>
<dbReference type="GO" id="GO:0007584">
    <property type="term" value="P:response to nutrient"/>
    <property type="evidence" value="ECO:0000270"/>
    <property type="project" value="RGD"/>
</dbReference>
<dbReference type="GO" id="GO:0043434">
    <property type="term" value="P:response to peptide hormone"/>
    <property type="evidence" value="ECO:0000270"/>
    <property type="project" value="RGD"/>
</dbReference>
<dbReference type="GO" id="GO:0009651">
    <property type="term" value="P:response to salt stress"/>
    <property type="evidence" value="ECO:0000270"/>
    <property type="project" value="RGD"/>
</dbReference>
<dbReference type="GO" id="GO:0009410">
    <property type="term" value="P:response to xenobiotic stimulus"/>
    <property type="evidence" value="ECO:0000270"/>
    <property type="project" value="RGD"/>
</dbReference>
<dbReference type="FunFam" id="1.10.630.10:FF:000015">
    <property type="entry name" value="Cholesterol side-chain cleavage enzyme, mitochondrial"/>
    <property type="match status" value="1"/>
</dbReference>
<dbReference type="Gene3D" id="1.10.630.10">
    <property type="entry name" value="Cytochrome P450"/>
    <property type="match status" value="1"/>
</dbReference>
<dbReference type="InterPro" id="IPR050479">
    <property type="entry name" value="CYP11_CYP27_families"/>
</dbReference>
<dbReference type="InterPro" id="IPR001128">
    <property type="entry name" value="Cyt_P450"/>
</dbReference>
<dbReference type="InterPro" id="IPR017972">
    <property type="entry name" value="Cyt_P450_CS"/>
</dbReference>
<dbReference type="InterPro" id="IPR002399">
    <property type="entry name" value="Cyt_P450_mitochondrial"/>
</dbReference>
<dbReference type="InterPro" id="IPR036396">
    <property type="entry name" value="Cyt_P450_sf"/>
</dbReference>
<dbReference type="PANTHER" id="PTHR24279">
    <property type="entry name" value="CYTOCHROME P450"/>
    <property type="match status" value="1"/>
</dbReference>
<dbReference type="PANTHER" id="PTHR24279:SF1">
    <property type="entry name" value="CYTOCHROME P450 11B2, MITOCHONDRIAL"/>
    <property type="match status" value="1"/>
</dbReference>
<dbReference type="Pfam" id="PF00067">
    <property type="entry name" value="p450"/>
    <property type="match status" value="1"/>
</dbReference>
<dbReference type="PRINTS" id="PR00408">
    <property type="entry name" value="MITP450"/>
</dbReference>
<dbReference type="PRINTS" id="PR00385">
    <property type="entry name" value="P450"/>
</dbReference>
<dbReference type="SUPFAM" id="SSF48264">
    <property type="entry name" value="Cytochrome P450"/>
    <property type="match status" value="1"/>
</dbReference>
<dbReference type="PROSITE" id="PS00086">
    <property type="entry name" value="CYTOCHROME_P450"/>
    <property type="match status" value="1"/>
</dbReference>
<keyword id="KW-0903">Direct protein sequencing</keyword>
<keyword id="KW-0349">Heme</keyword>
<keyword id="KW-0408">Iron</keyword>
<keyword id="KW-0472">Membrane</keyword>
<keyword id="KW-0479">Metal-binding</keyword>
<keyword id="KW-0496">Mitochondrion</keyword>
<keyword id="KW-0999">Mitochondrion inner membrane</keyword>
<keyword id="KW-0503">Monooxygenase</keyword>
<keyword id="KW-0560">Oxidoreductase</keyword>
<keyword id="KW-1185">Reference proteome</keyword>
<keyword id="KW-0755">Steroidogenesis</keyword>
<keyword id="KW-0809">Transit peptide</keyword>